<evidence type="ECO:0000255" key="1">
    <source>
        <dbReference type="HAMAP-Rule" id="MF_00022"/>
    </source>
</evidence>
<keyword id="KW-0030">Aminoacyl-tRNA synthetase</keyword>
<keyword id="KW-0067">ATP-binding</keyword>
<keyword id="KW-0963">Cytoplasm</keyword>
<keyword id="KW-0436">Ligase</keyword>
<keyword id="KW-0547">Nucleotide-binding</keyword>
<keyword id="KW-0648">Protein biosynthesis</keyword>
<keyword id="KW-1185">Reference proteome</keyword>
<protein>
    <recommendedName>
        <fullName evidence="1">Glutamate--tRNA ligase</fullName>
        <ecNumber evidence="1">6.1.1.17</ecNumber>
    </recommendedName>
    <alternativeName>
        <fullName evidence="1">Glutamyl-tRNA synthetase</fullName>
        <shortName evidence="1">GluRS</shortName>
    </alternativeName>
</protein>
<accession>A9NEI5</accession>
<proteinExistence type="inferred from homology"/>
<organism>
    <name type="scientific">Acholeplasma laidlawii (strain PG-8A)</name>
    <dbReference type="NCBI Taxonomy" id="441768"/>
    <lineage>
        <taxon>Bacteria</taxon>
        <taxon>Bacillati</taxon>
        <taxon>Mycoplasmatota</taxon>
        <taxon>Mollicutes</taxon>
        <taxon>Acholeplasmatales</taxon>
        <taxon>Acholeplasmataceae</taxon>
        <taxon>Acholeplasma</taxon>
    </lineage>
</organism>
<reference key="1">
    <citation type="journal article" date="2011" name="J. Bacteriol.">
        <title>Complete genome and proteome of Acholeplasma laidlawii.</title>
        <authorList>
            <person name="Lazarev V.N."/>
            <person name="Levitskii S.A."/>
            <person name="Basovskii Y.I."/>
            <person name="Chukin M.M."/>
            <person name="Akopian T.A."/>
            <person name="Vereshchagin V.V."/>
            <person name="Kostrjukova E.S."/>
            <person name="Kovaleva G.Y."/>
            <person name="Kazanov M.D."/>
            <person name="Malko D.B."/>
            <person name="Vitreschak A.G."/>
            <person name="Sernova N.V."/>
            <person name="Gelfand M.S."/>
            <person name="Demina I.A."/>
            <person name="Serebryakova M.V."/>
            <person name="Galyamina M.A."/>
            <person name="Vtyurin N.N."/>
            <person name="Rogov S.I."/>
            <person name="Alexeev D.G."/>
            <person name="Ladygina V.G."/>
            <person name="Govorun V.M."/>
        </authorList>
    </citation>
    <scope>NUCLEOTIDE SEQUENCE [LARGE SCALE GENOMIC DNA]</scope>
    <source>
        <strain>PG-8A</strain>
    </source>
</reference>
<sequence>MKKFRARYAPSPTGHLHIGNARTALFNYLFARHHGGDFIIRIEDTDVARNVEGGITSQLNNLKWLGMDWDEGVDVGGSFGPYNQLSRLELYKKYAFELLEKGYAYKDFKEGSEDFAIRFKVPENVLYEFDDVIRGTLKFESKDVEDWIILKDNGIPTYNFAVVIDDHYMEITHVFRGEEHITNTPKQLMVYDALGWEYPTFGHMTIIVNEDRKKLSKRDTNTIQFIEDYKNLGFLPEAMLNFLSLLGWSPKDDEEILSKEELISLFDEHRLSAAPSYFDKQKLAYINSRYLKALSMDELKDLTRPFLINHGIEIKNEAWLESLLSILKDRLSYGAEITKYYDQFFHHDFVLEPAVLEEIKEFDNEVVIKGFMGAISSVDFTDDVAINQALKDTGKALNIKGKPLFMPIRIATTGEAHGPSLPVSLSLLGKELVIKRMNKTLEVLKGETK</sequence>
<dbReference type="EC" id="6.1.1.17" evidence="1"/>
<dbReference type="EMBL" id="CP000896">
    <property type="protein sequence ID" value="ABX80765.1"/>
    <property type="molecule type" value="Genomic_DNA"/>
</dbReference>
<dbReference type="RefSeq" id="WP_012242096.1">
    <property type="nucleotide sequence ID" value="NC_010163.1"/>
</dbReference>
<dbReference type="SMR" id="A9NEI5"/>
<dbReference type="STRING" id="441768.ACL_0139"/>
<dbReference type="GeneID" id="41338337"/>
<dbReference type="KEGG" id="acl:ACL_0139"/>
<dbReference type="eggNOG" id="COG0008">
    <property type="taxonomic scope" value="Bacteria"/>
</dbReference>
<dbReference type="HOGENOM" id="CLU_015768_6_1_14"/>
<dbReference type="OrthoDB" id="9807503at2"/>
<dbReference type="Proteomes" id="UP000008558">
    <property type="component" value="Chromosome"/>
</dbReference>
<dbReference type="GO" id="GO:0005829">
    <property type="term" value="C:cytosol"/>
    <property type="evidence" value="ECO:0007669"/>
    <property type="project" value="TreeGrafter"/>
</dbReference>
<dbReference type="GO" id="GO:0005524">
    <property type="term" value="F:ATP binding"/>
    <property type="evidence" value="ECO:0007669"/>
    <property type="project" value="UniProtKB-UniRule"/>
</dbReference>
<dbReference type="GO" id="GO:0004818">
    <property type="term" value="F:glutamate-tRNA ligase activity"/>
    <property type="evidence" value="ECO:0007669"/>
    <property type="project" value="UniProtKB-UniRule"/>
</dbReference>
<dbReference type="GO" id="GO:0000049">
    <property type="term" value="F:tRNA binding"/>
    <property type="evidence" value="ECO:0007669"/>
    <property type="project" value="InterPro"/>
</dbReference>
<dbReference type="GO" id="GO:0008270">
    <property type="term" value="F:zinc ion binding"/>
    <property type="evidence" value="ECO:0007669"/>
    <property type="project" value="InterPro"/>
</dbReference>
<dbReference type="GO" id="GO:0006424">
    <property type="term" value="P:glutamyl-tRNA aminoacylation"/>
    <property type="evidence" value="ECO:0007669"/>
    <property type="project" value="UniProtKB-UniRule"/>
</dbReference>
<dbReference type="CDD" id="cd00808">
    <property type="entry name" value="GluRS_core"/>
    <property type="match status" value="1"/>
</dbReference>
<dbReference type="Gene3D" id="1.10.10.350">
    <property type="match status" value="1"/>
</dbReference>
<dbReference type="Gene3D" id="1.10.8.70">
    <property type="entry name" value="Glutamate-tRNA synthetase, class I, anticodon-binding domain 1"/>
    <property type="match status" value="1"/>
</dbReference>
<dbReference type="Gene3D" id="1.10.1160.10">
    <property type="entry name" value="Glutamyl-trna Synthetase, Domain 2"/>
    <property type="match status" value="1"/>
</dbReference>
<dbReference type="Gene3D" id="3.90.800.10">
    <property type="entry name" value="Glutamyl-tRNA Synthetase, Domain 3"/>
    <property type="match status" value="1"/>
</dbReference>
<dbReference type="Gene3D" id="3.40.50.620">
    <property type="entry name" value="HUPs"/>
    <property type="match status" value="2"/>
</dbReference>
<dbReference type="HAMAP" id="MF_00022">
    <property type="entry name" value="Glu_tRNA_synth_type1"/>
    <property type="match status" value="1"/>
</dbReference>
<dbReference type="InterPro" id="IPR045462">
    <property type="entry name" value="aa-tRNA-synth_I_cd-bd"/>
</dbReference>
<dbReference type="InterPro" id="IPR020751">
    <property type="entry name" value="aa-tRNA-synth_I_codon-bd_sub2"/>
</dbReference>
<dbReference type="InterPro" id="IPR001412">
    <property type="entry name" value="aa-tRNA-synth_I_CS"/>
</dbReference>
<dbReference type="InterPro" id="IPR008925">
    <property type="entry name" value="aa_tRNA-synth_I_cd-bd_sf"/>
</dbReference>
<dbReference type="InterPro" id="IPR004527">
    <property type="entry name" value="Glu-tRNA-ligase_bac/mito"/>
</dbReference>
<dbReference type="InterPro" id="IPR020752">
    <property type="entry name" value="Glu-tRNA-synth_I_codon-bd_sub1"/>
</dbReference>
<dbReference type="InterPro" id="IPR000924">
    <property type="entry name" value="Glu/Gln-tRNA-synth"/>
</dbReference>
<dbReference type="InterPro" id="IPR020058">
    <property type="entry name" value="Glu/Gln-tRNA-synth_Ib_cat-dom"/>
</dbReference>
<dbReference type="InterPro" id="IPR020061">
    <property type="entry name" value="Glu_tRNA_lig_a-bdl"/>
</dbReference>
<dbReference type="InterPro" id="IPR049940">
    <property type="entry name" value="GluQ/Sye"/>
</dbReference>
<dbReference type="InterPro" id="IPR033910">
    <property type="entry name" value="GluRS_core"/>
</dbReference>
<dbReference type="InterPro" id="IPR014729">
    <property type="entry name" value="Rossmann-like_a/b/a_fold"/>
</dbReference>
<dbReference type="NCBIfam" id="TIGR00464">
    <property type="entry name" value="gltX_bact"/>
    <property type="match status" value="1"/>
</dbReference>
<dbReference type="PANTHER" id="PTHR43311">
    <property type="entry name" value="GLUTAMATE--TRNA LIGASE"/>
    <property type="match status" value="1"/>
</dbReference>
<dbReference type="PANTHER" id="PTHR43311:SF2">
    <property type="entry name" value="GLUTAMATE--TRNA LIGASE, MITOCHONDRIAL-RELATED"/>
    <property type="match status" value="1"/>
</dbReference>
<dbReference type="Pfam" id="PF19269">
    <property type="entry name" value="Anticodon_2"/>
    <property type="match status" value="1"/>
</dbReference>
<dbReference type="Pfam" id="PF00749">
    <property type="entry name" value="tRNA-synt_1c"/>
    <property type="match status" value="2"/>
</dbReference>
<dbReference type="PRINTS" id="PR00987">
    <property type="entry name" value="TRNASYNTHGLU"/>
</dbReference>
<dbReference type="SUPFAM" id="SSF48163">
    <property type="entry name" value="An anticodon-binding domain of class I aminoacyl-tRNA synthetases"/>
    <property type="match status" value="1"/>
</dbReference>
<dbReference type="SUPFAM" id="SSF52374">
    <property type="entry name" value="Nucleotidylyl transferase"/>
    <property type="match status" value="1"/>
</dbReference>
<dbReference type="PROSITE" id="PS00178">
    <property type="entry name" value="AA_TRNA_LIGASE_I"/>
    <property type="match status" value="1"/>
</dbReference>
<gene>
    <name evidence="1" type="primary">gltX</name>
    <name type="ordered locus">ACL_0139</name>
</gene>
<feature type="chain" id="PRO_1000074315" description="Glutamate--tRNA ligase">
    <location>
        <begin position="1"/>
        <end position="449"/>
    </location>
</feature>
<feature type="short sequence motif" description="'HIGH' region" evidence="1">
    <location>
        <begin position="10"/>
        <end position="20"/>
    </location>
</feature>
<feature type="short sequence motif" description="'KMSKS' region" evidence="1">
    <location>
        <begin position="214"/>
        <end position="218"/>
    </location>
</feature>
<feature type="binding site" evidence="1">
    <location>
        <position position="217"/>
    </location>
    <ligand>
        <name>ATP</name>
        <dbReference type="ChEBI" id="CHEBI:30616"/>
    </ligand>
</feature>
<name>SYE_ACHLI</name>
<comment type="function">
    <text evidence="1">Catalyzes the attachment of glutamate to tRNA(Glu) in a two-step reaction: glutamate is first activated by ATP to form Glu-AMP and then transferred to the acceptor end of tRNA(Glu).</text>
</comment>
<comment type="catalytic activity">
    <reaction evidence="1">
        <text>tRNA(Glu) + L-glutamate + ATP = L-glutamyl-tRNA(Glu) + AMP + diphosphate</text>
        <dbReference type="Rhea" id="RHEA:23540"/>
        <dbReference type="Rhea" id="RHEA-COMP:9663"/>
        <dbReference type="Rhea" id="RHEA-COMP:9680"/>
        <dbReference type="ChEBI" id="CHEBI:29985"/>
        <dbReference type="ChEBI" id="CHEBI:30616"/>
        <dbReference type="ChEBI" id="CHEBI:33019"/>
        <dbReference type="ChEBI" id="CHEBI:78442"/>
        <dbReference type="ChEBI" id="CHEBI:78520"/>
        <dbReference type="ChEBI" id="CHEBI:456215"/>
        <dbReference type="EC" id="6.1.1.17"/>
    </reaction>
</comment>
<comment type="subunit">
    <text evidence="1">Monomer.</text>
</comment>
<comment type="subcellular location">
    <subcellularLocation>
        <location evidence="1">Cytoplasm</location>
    </subcellularLocation>
</comment>
<comment type="similarity">
    <text evidence="1">Belongs to the class-I aminoacyl-tRNA synthetase family. Glutamate--tRNA ligase type 1 subfamily.</text>
</comment>